<organism>
    <name type="scientific">Chlamydia abortus (strain DSM 27085 / S26/3)</name>
    <name type="common">Chlamydophila abortus</name>
    <dbReference type="NCBI Taxonomy" id="218497"/>
    <lineage>
        <taxon>Bacteria</taxon>
        <taxon>Pseudomonadati</taxon>
        <taxon>Chlamydiota</taxon>
        <taxon>Chlamydiia</taxon>
        <taxon>Chlamydiales</taxon>
        <taxon>Chlamydiaceae</taxon>
        <taxon>Chlamydia/Chlamydophila group</taxon>
        <taxon>Chlamydia</taxon>
    </lineage>
</organism>
<comment type="function">
    <text evidence="1">Excises uracil residues from the DNA which can arise as a result of misincorporation of dUMP residues by DNA polymerase or due to deamination of cytosine.</text>
</comment>
<comment type="catalytic activity">
    <reaction evidence="1">
        <text>Hydrolyzes single-stranded DNA or mismatched double-stranded DNA and polynucleotides, releasing free uracil.</text>
        <dbReference type="EC" id="3.2.2.27"/>
    </reaction>
</comment>
<comment type="subcellular location">
    <subcellularLocation>
        <location evidence="1">Cytoplasm</location>
    </subcellularLocation>
</comment>
<comment type="similarity">
    <text evidence="1">Belongs to the uracil-DNA glycosylase (UDG) superfamily. UNG family.</text>
</comment>
<protein>
    <recommendedName>
        <fullName evidence="1">Uracil-DNA glycosylase</fullName>
        <shortName evidence="1">UDG</shortName>
        <ecNumber evidence="1">3.2.2.27</ecNumber>
    </recommendedName>
</protein>
<evidence type="ECO:0000255" key="1">
    <source>
        <dbReference type="HAMAP-Rule" id="MF_00148"/>
    </source>
</evidence>
<reference key="1">
    <citation type="journal article" date="2005" name="Genome Res.">
        <title>The Chlamydophila abortus genome sequence reveals an array of variable proteins that contribute to interspecies variation.</title>
        <authorList>
            <person name="Thomson N.R."/>
            <person name="Yeats C."/>
            <person name="Bell K."/>
            <person name="Holden M.T.G."/>
            <person name="Bentley S.D."/>
            <person name="Livingstone M."/>
            <person name="Cerdeno-Tarraga A.-M."/>
            <person name="Harris B."/>
            <person name="Doggett J."/>
            <person name="Ormond D."/>
            <person name="Mungall K."/>
            <person name="Clarke K."/>
            <person name="Feltwell T."/>
            <person name="Hance Z."/>
            <person name="Sanders M."/>
            <person name="Quail M.A."/>
            <person name="Price C."/>
            <person name="Barrell B.G."/>
            <person name="Parkhill J."/>
            <person name="Longbottom D."/>
        </authorList>
    </citation>
    <scope>NUCLEOTIDE SEQUENCE [LARGE SCALE GENOMIC DNA]</scope>
    <source>
        <strain>DSM 27085 / S26/3</strain>
    </source>
</reference>
<keyword id="KW-0963">Cytoplasm</keyword>
<keyword id="KW-0227">DNA damage</keyword>
<keyword id="KW-0234">DNA repair</keyword>
<keyword id="KW-0378">Hydrolase</keyword>
<proteinExistence type="inferred from homology"/>
<sequence>MQNAFTIDQLPLSWQEQLENEWSQPYMYKLREFLQSEYSQKTIYPAKDNIFTALKSTPFDSVRVVILGQDPYPGEGQAHGLSFSVPQGVRLPPSLVNIFSELHADVGVKNTTGCLQSWADQGILLLNTVLTVRAGSPFSHAGQGWEQFTDAIITKLIENRSHVIFVLWGNAARKTCDLLFRSTHKHAILAAAHPSPLAAHRGFFGCSHFSKINYLLKKLNKPMINWKLP</sequence>
<accession>Q5L4Q4</accession>
<gene>
    <name evidence="1" type="primary">ung</name>
    <name type="ordered locus">CAB954</name>
</gene>
<name>UNG_CHLAB</name>
<feature type="chain" id="PRO_0000176080" description="Uracil-DNA glycosylase">
    <location>
        <begin position="1"/>
        <end position="229"/>
    </location>
</feature>
<feature type="active site" description="Proton acceptor" evidence="1">
    <location>
        <position position="70"/>
    </location>
</feature>
<dbReference type="EC" id="3.2.2.27" evidence="1"/>
<dbReference type="EMBL" id="CR848038">
    <property type="protein sequence ID" value="CAH64392.1"/>
    <property type="molecule type" value="Genomic_DNA"/>
</dbReference>
<dbReference type="RefSeq" id="WP_006344553.1">
    <property type="nucleotide sequence ID" value="NC_004552.2"/>
</dbReference>
<dbReference type="SMR" id="Q5L4Q4"/>
<dbReference type="KEGG" id="cab:CAB954"/>
<dbReference type="eggNOG" id="COG0692">
    <property type="taxonomic scope" value="Bacteria"/>
</dbReference>
<dbReference type="HOGENOM" id="CLU_032162_3_0_0"/>
<dbReference type="OrthoDB" id="9804372at2"/>
<dbReference type="Proteomes" id="UP000001012">
    <property type="component" value="Chromosome"/>
</dbReference>
<dbReference type="GO" id="GO:0005737">
    <property type="term" value="C:cytoplasm"/>
    <property type="evidence" value="ECO:0007669"/>
    <property type="project" value="UniProtKB-SubCell"/>
</dbReference>
<dbReference type="GO" id="GO:0004844">
    <property type="term" value="F:uracil DNA N-glycosylase activity"/>
    <property type="evidence" value="ECO:0007669"/>
    <property type="project" value="UniProtKB-UniRule"/>
</dbReference>
<dbReference type="GO" id="GO:0097510">
    <property type="term" value="P:base-excision repair, AP site formation via deaminated base removal"/>
    <property type="evidence" value="ECO:0007669"/>
    <property type="project" value="TreeGrafter"/>
</dbReference>
<dbReference type="CDD" id="cd10027">
    <property type="entry name" value="UDG-F1-like"/>
    <property type="match status" value="1"/>
</dbReference>
<dbReference type="FunFam" id="3.40.470.10:FF:000008">
    <property type="entry name" value="Uracil-DNA glycosylase"/>
    <property type="match status" value="1"/>
</dbReference>
<dbReference type="Gene3D" id="3.40.470.10">
    <property type="entry name" value="Uracil-DNA glycosylase-like domain"/>
    <property type="match status" value="1"/>
</dbReference>
<dbReference type="HAMAP" id="MF_00148">
    <property type="entry name" value="UDG"/>
    <property type="match status" value="1"/>
</dbReference>
<dbReference type="InterPro" id="IPR002043">
    <property type="entry name" value="UDG_fam1"/>
</dbReference>
<dbReference type="InterPro" id="IPR018085">
    <property type="entry name" value="Ura-DNA_Glyclase_AS"/>
</dbReference>
<dbReference type="InterPro" id="IPR005122">
    <property type="entry name" value="Uracil-DNA_glycosylase-like"/>
</dbReference>
<dbReference type="InterPro" id="IPR036895">
    <property type="entry name" value="Uracil-DNA_glycosylase-like_sf"/>
</dbReference>
<dbReference type="NCBIfam" id="NF003588">
    <property type="entry name" value="PRK05254.1-1"/>
    <property type="match status" value="1"/>
</dbReference>
<dbReference type="NCBIfam" id="NF003589">
    <property type="entry name" value="PRK05254.1-2"/>
    <property type="match status" value="1"/>
</dbReference>
<dbReference type="NCBIfam" id="NF003591">
    <property type="entry name" value="PRK05254.1-4"/>
    <property type="match status" value="1"/>
</dbReference>
<dbReference type="NCBIfam" id="NF003592">
    <property type="entry name" value="PRK05254.1-5"/>
    <property type="match status" value="1"/>
</dbReference>
<dbReference type="NCBIfam" id="TIGR00628">
    <property type="entry name" value="ung"/>
    <property type="match status" value="1"/>
</dbReference>
<dbReference type="PANTHER" id="PTHR11264">
    <property type="entry name" value="URACIL-DNA GLYCOSYLASE"/>
    <property type="match status" value="1"/>
</dbReference>
<dbReference type="PANTHER" id="PTHR11264:SF0">
    <property type="entry name" value="URACIL-DNA GLYCOSYLASE"/>
    <property type="match status" value="1"/>
</dbReference>
<dbReference type="Pfam" id="PF03167">
    <property type="entry name" value="UDG"/>
    <property type="match status" value="1"/>
</dbReference>
<dbReference type="SMART" id="SM00986">
    <property type="entry name" value="UDG"/>
    <property type="match status" value="1"/>
</dbReference>
<dbReference type="SMART" id="SM00987">
    <property type="entry name" value="UreE_C"/>
    <property type="match status" value="1"/>
</dbReference>
<dbReference type="SUPFAM" id="SSF52141">
    <property type="entry name" value="Uracil-DNA glycosylase-like"/>
    <property type="match status" value="1"/>
</dbReference>
<dbReference type="PROSITE" id="PS00130">
    <property type="entry name" value="U_DNA_GLYCOSYLASE"/>
    <property type="match status" value="1"/>
</dbReference>